<keyword id="KW-1003">Cell membrane</keyword>
<keyword id="KW-1015">Disulfide bond</keyword>
<keyword id="KW-0325">Glycoprotein</keyword>
<keyword id="KW-0390">IgG-binding protein</keyword>
<keyword id="KW-0391">Immunity</keyword>
<keyword id="KW-0393">Immunoglobulin domain</keyword>
<keyword id="KW-0472">Membrane</keyword>
<keyword id="KW-0675">Receptor</keyword>
<keyword id="KW-1185">Reference proteome</keyword>
<keyword id="KW-0677">Repeat</keyword>
<keyword id="KW-0964">Secreted</keyword>
<keyword id="KW-0732">Signal</keyword>
<keyword id="KW-0812">Transmembrane</keyword>
<keyword id="KW-1133">Transmembrane helix</keyword>
<gene>
    <name type="primary">FCGR3A</name>
    <name type="synonym">FCGR3</name>
</gene>
<reference key="1">
    <citation type="journal article" date="2006" name="J. Immunol.">
        <title>IgG Fc receptor III homologues in nonhuman primate species: genetic characterization and ligand interactions.</title>
        <authorList>
            <person name="Rogers K.A."/>
            <person name="Scinicariello F."/>
            <person name="Attanasio R."/>
        </authorList>
    </citation>
    <scope>NUCLEOTIDE SEQUENCE [MRNA]</scope>
    <scope>TISSUE SPECIFICITY</scope>
    <source>
        <tissue>Blood</tissue>
    </source>
</reference>
<reference key="2">
    <citation type="journal article" date="1994" name="Bull. World Health Organ.">
        <title>Nomenclature of Fc receptors. IUIS/WHO Subcommittee on Nomenclature of Fc receptors.</title>
        <authorList>
            <person name="Conrad D."/>
            <person name="Cooper M."/>
            <person name="Fridman W.H."/>
            <person name="Kinet J.P."/>
            <person name="Ravetch J."/>
        </authorList>
    </citation>
    <scope>NOMENCLATURE</scope>
</reference>
<organism>
    <name type="scientific">Papio anubis</name>
    <name type="common">Olive baboon</name>
    <dbReference type="NCBI Taxonomy" id="9555"/>
    <lineage>
        <taxon>Eukaryota</taxon>
        <taxon>Metazoa</taxon>
        <taxon>Chordata</taxon>
        <taxon>Craniata</taxon>
        <taxon>Vertebrata</taxon>
        <taxon>Euteleostomi</taxon>
        <taxon>Mammalia</taxon>
        <taxon>Eutheria</taxon>
        <taxon>Euarchontoglires</taxon>
        <taxon>Primates</taxon>
        <taxon>Haplorrhini</taxon>
        <taxon>Catarrhini</taxon>
        <taxon>Cercopithecidae</taxon>
        <taxon>Cercopithecinae</taxon>
        <taxon>Papio</taxon>
    </lineage>
</organism>
<accession>Q09TM2</accession>
<comment type="function">
    <text evidence="2">Receptor for the invariable Fc fragment of immunoglobulin gamma (IgG). Optimally activated upon binding of clustered antigen-IgG complexes displayed on cell surfaces, triggers lysis of antibody-coated cells, a process known as antibody-dependent cellular cytotoxicity (ADCC). Does not bind free monomeric IgG, thus avoiding inappropriate effector cell activation in the absence of antigenic trigger (By similarity). Mediates IgG effector functions on natural killer (NK) cells. Binds antigen-IgG complexes generated upon infection and triggers NK cell-dependent cytokine production and degranulation to limit viral load and propagation. Involved in the generation of memory-like adaptive NK cells capable to produce high amounts of IFNG and to efficiently eliminate virus-infected cells via ADCC. Regulates NK cell survival and proliferation, in particular by preventing NK cell progenitor apoptosis (By similarity). Fc-binding subunit that associates with CD247 and/or FCER1G adapters to form functional signaling complexes. Following the engagement of antigen-IgG complexes, triggers phosphorylation of immunoreceptor tyrosine-based activation motif (ITAM)-containing adapters with subsequent activation of phosphatidylinositol 3-kinase signaling and sustained elevation of intracellular calcium that ultimately drive NK cell activation. The ITAM-dependent signaling coupled to receptor phosphorylation by PKC mediates robust intracellular calcium flux that leads to production of pro-inflammatory cytokines, whereas in the absence of receptor phosphorylation it mainly activates phosphatidylinositol 3-kinase signaling leading to cell degranulation. Costimulates NK cells and trigger lysis of target cells independently of IgG binding (By similarity). Mediates the antitumor activities of therapeutic antibodies. Upon ligation on monocytes triggers TNFA-dependent ADCC of IgG-coated tumor cells (By similarity). Mediates enhanced ADCC in response to afucosylated IgGs (By similarity).</text>
</comment>
<comment type="subunit">
    <text evidence="2">Forms a heterooligomeric complex with ITAM-containing signaling subunits, either a homodimer of CD247, a homodimer of FCER1G or a heterodimer of CD247 and FCER1G, to form a functional receptor complex. Interacts (via transmembrane domain) with signaling subunits; this interaction is a prerequisite for receptor complex expression on the cell surface and intracellular signal transduction. Binds the Fc region of antigen-complexed IgG with a preference for IgG1 and IgG3 isotypes (By similarity). Interacts with CD2; this interaction is involved in NK cell activation and cytotoxicity (By similarity). Interacts with S100A4; this interaction inhibits PKC-dependent phosphorylation of FCGR3A (By similarity).</text>
</comment>
<comment type="subcellular location">
    <subcellularLocation>
        <location evidence="2">Cell membrane</location>
        <topology evidence="3">Single-pass type I membrane protein</topology>
    </subcellularLocation>
    <subcellularLocation>
        <location evidence="2">Secreted</location>
    </subcellularLocation>
    <text evidence="2">Also exists as a soluble receptor.</text>
</comment>
<comment type="tissue specificity">
    <text evidence="6">Lymphocytes and monocytes.</text>
</comment>
<comment type="PTM">
    <text evidence="2">Glycosylated. Glycosylation plays an inhibitory role in the interaction with IgG1 and IgG2.</text>
</comment>
<comment type="PTM">
    <text evidence="2">Undergoes rapid ectodomain shedding upon NK cell stimulation. The soluble form is produced by a proteolytic cleavage mediated by ADAM17. Repeated stimulation causes receptor shedding, a mechanism that allows for increased NK cell motility and detachment from opsonized target cells while avoiding activation-induced NK cell apoptosis.</text>
</comment>
<protein>
    <recommendedName>
        <fullName evidence="2">Low affinity immunoglobulin gamma Fc region receptor III-A</fullName>
        <shortName>IgG Fc receptor III-A</shortName>
    </recommendedName>
    <alternativeName>
        <fullName>Fc-gamma RIII-alpha</fullName>
        <shortName>Fc-gamma RIII</shortName>
        <shortName>Fc-gamma RIIIa</shortName>
        <shortName evidence="1">FcgammaRIIIa</shortName>
    </alternativeName>
    <cdAntigenName evidence="7">CD16a</cdAntigenName>
</protein>
<name>FCG3A_PAPAN</name>
<sequence>MWQLLLPTALLLLVSAGMRAEDLPKAVVFLEPQWYRVLEKDSVTLKCQGAYSPEDNSTRWFHNESLISSQTSSYFIAAARVNNSGEYRCQTSLSTLSDPVQLEVHIGWLLLQAPRWVFKEEDSIHLRCHSWKNTLLHKVTYLQNGKGRKYFHQNSDFYIPKATLKDSGSYFCRGLIGSKNVSSETVNITITQDLAVSSISSFFPPGYQVSFCLVMVLLFAVDTGLYFSVKKSIPSSTSDWKDHKFKWSKDPQDK</sequence>
<dbReference type="EMBL" id="DQ423378">
    <property type="protein sequence ID" value="ABD83658.1"/>
    <property type="molecule type" value="mRNA"/>
</dbReference>
<dbReference type="RefSeq" id="NP_001106117.1">
    <property type="nucleotide sequence ID" value="NM_001112647.1"/>
</dbReference>
<dbReference type="RefSeq" id="XP_031519583.1">
    <property type="nucleotide sequence ID" value="XM_031663723.1"/>
</dbReference>
<dbReference type="SMR" id="Q09TM2"/>
<dbReference type="STRING" id="9555.ENSPANP00000032550"/>
<dbReference type="GlyCosmos" id="Q09TM2">
    <property type="glycosylation" value="1 site, No reported glycans"/>
</dbReference>
<dbReference type="GeneID" id="100126738"/>
<dbReference type="KEGG" id="panu:100126738"/>
<dbReference type="CTD" id="2214"/>
<dbReference type="eggNOG" id="ENOG502RU1M">
    <property type="taxonomic scope" value="Eukaryota"/>
</dbReference>
<dbReference type="Proteomes" id="UP000028761">
    <property type="component" value="Unplaced"/>
</dbReference>
<dbReference type="GO" id="GO:0009897">
    <property type="term" value="C:external side of plasma membrane"/>
    <property type="evidence" value="ECO:0007669"/>
    <property type="project" value="TreeGrafter"/>
</dbReference>
<dbReference type="GO" id="GO:0005615">
    <property type="term" value="C:extracellular space"/>
    <property type="evidence" value="ECO:0000250"/>
    <property type="project" value="UniProtKB"/>
</dbReference>
<dbReference type="GO" id="GO:0005886">
    <property type="term" value="C:plasma membrane"/>
    <property type="evidence" value="ECO:0000250"/>
    <property type="project" value="UniProtKB"/>
</dbReference>
<dbReference type="GO" id="GO:0019864">
    <property type="term" value="F:IgG binding"/>
    <property type="evidence" value="ECO:0007669"/>
    <property type="project" value="UniProtKB-KW"/>
</dbReference>
<dbReference type="GO" id="GO:0019770">
    <property type="term" value="F:IgG receptor activity"/>
    <property type="evidence" value="ECO:0007669"/>
    <property type="project" value="TreeGrafter"/>
</dbReference>
<dbReference type="GO" id="GO:0001788">
    <property type="term" value="P:antibody-dependent cellular cytotoxicity"/>
    <property type="evidence" value="ECO:0000250"/>
    <property type="project" value="UniProtKB"/>
</dbReference>
<dbReference type="GO" id="GO:0019722">
    <property type="term" value="P:calcium-mediated signaling"/>
    <property type="evidence" value="ECO:0000250"/>
    <property type="project" value="UniProtKB"/>
</dbReference>
<dbReference type="GO" id="GO:0038094">
    <property type="term" value="P:Fc-gamma receptor signaling pathway"/>
    <property type="evidence" value="ECO:0000250"/>
    <property type="project" value="UniProtKB"/>
</dbReference>
<dbReference type="GO" id="GO:0030101">
    <property type="term" value="P:natural killer cell activation"/>
    <property type="evidence" value="ECO:0000250"/>
    <property type="project" value="UniProtKB"/>
</dbReference>
<dbReference type="GO" id="GO:0043320">
    <property type="term" value="P:natural killer cell degranulation"/>
    <property type="evidence" value="ECO:0000250"/>
    <property type="project" value="UniProtKB"/>
</dbReference>
<dbReference type="GO" id="GO:0042267">
    <property type="term" value="P:natural killer cell mediated cytotoxicity"/>
    <property type="evidence" value="ECO:0000250"/>
    <property type="project" value="UniProtKB"/>
</dbReference>
<dbReference type="GO" id="GO:0043491">
    <property type="term" value="P:phosphatidylinositol 3-kinase/protein kinase B signal transduction"/>
    <property type="evidence" value="ECO:0000250"/>
    <property type="project" value="UniProtKB"/>
</dbReference>
<dbReference type="CDD" id="cd05752">
    <property type="entry name" value="Ig1_FcgammaR_like"/>
    <property type="match status" value="1"/>
</dbReference>
<dbReference type="CDD" id="cd05753">
    <property type="entry name" value="Ig2_FcgammaR_like"/>
    <property type="match status" value="1"/>
</dbReference>
<dbReference type="FunFam" id="2.60.40.10:FF:000217">
    <property type="entry name" value="High affinity immunoglobulin gamma Fc receptor I"/>
    <property type="match status" value="1"/>
</dbReference>
<dbReference type="FunFam" id="2.60.40.10:FF:000356">
    <property type="entry name" value="Low affinity immunoglobulin gamma Fc region receptor III-A"/>
    <property type="match status" value="1"/>
</dbReference>
<dbReference type="Gene3D" id="2.60.40.10">
    <property type="entry name" value="Immunoglobulins"/>
    <property type="match status" value="2"/>
</dbReference>
<dbReference type="InterPro" id="IPR007110">
    <property type="entry name" value="Ig-like_dom"/>
</dbReference>
<dbReference type="InterPro" id="IPR036179">
    <property type="entry name" value="Ig-like_dom_sf"/>
</dbReference>
<dbReference type="InterPro" id="IPR013783">
    <property type="entry name" value="Ig-like_fold"/>
</dbReference>
<dbReference type="InterPro" id="IPR050488">
    <property type="entry name" value="Ig_Fc_receptor"/>
</dbReference>
<dbReference type="InterPro" id="IPR003599">
    <property type="entry name" value="Ig_sub"/>
</dbReference>
<dbReference type="PANTHER" id="PTHR11481">
    <property type="entry name" value="IMMUNOGLOBULIN FC RECEPTOR"/>
    <property type="match status" value="1"/>
</dbReference>
<dbReference type="PANTHER" id="PTHR11481:SF103">
    <property type="entry name" value="LOW AFFINITY IMMUNOGLOBULIN GAMMA FC REGION RECEPTOR III-A-RELATED"/>
    <property type="match status" value="1"/>
</dbReference>
<dbReference type="Pfam" id="PF13895">
    <property type="entry name" value="Ig_2"/>
    <property type="match status" value="2"/>
</dbReference>
<dbReference type="SMART" id="SM00409">
    <property type="entry name" value="IG"/>
    <property type="match status" value="2"/>
</dbReference>
<dbReference type="SUPFAM" id="SSF48726">
    <property type="entry name" value="Immunoglobulin"/>
    <property type="match status" value="2"/>
</dbReference>
<dbReference type="PROSITE" id="PS50835">
    <property type="entry name" value="IG_LIKE"/>
    <property type="match status" value="1"/>
</dbReference>
<proteinExistence type="evidence at transcript level"/>
<evidence type="ECO:0000250" key="1">
    <source>
        <dbReference type="UniProtKB" id="A3RFZ7"/>
    </source>
</evidence>
<evidence type="ECO:0000250" key="2">
    <source>
        <dbReference type="UniProtKB" id="P08637"/>
    </source>
</evidence>
<evidence type="ECO:0000255" key="3"/>
<evidence type="ECO:0000255" key="4">
    <source>
        <dbReference type="PROSITE-ProRule" id="PRU00114"/>
    </source>
</evidence>
<evidence type="ECO:0000256" key="5">
    <source>
        <dbReference type="SAM" id="MobiDB-lite"/>
    </source>
</evidence>
<evidence type="ECO:0000269" key="6">
    <source>
    </source>
</evidence>
<evidence type="ECO:0000303" key="7">
    <source>
    </source>
</evidence>
<feature type="signal peptide" evidence="3">
    <location>
        <begin position="1"/>
        <end position="20"/>
    </location>
</feature>
<feature type="chain" id="PRO_0000379978" description="Low affinity immunoglobulin gamma Fc region receptor III-A">
    <location>
        <begin position="21"/>
        <end position="254"/>
    </location>
</feature>
<feature type="transmembrane region" description="Helical" evidence="3">
    <location>
        <begin position="207"/>
        <end position="229"/>
    </location>
</feature>
<feature type="domain" description="Ig-like C2-type 1">
    <location>
        <begin position="24"/>
        <end position="105"/>
    </location>
</feature>
<feature type="domain" description="Ig-like C2-type 2">
    <location>
        <begin position="107"/>
        <end position="189"/>
    </location>
</feature>
<feature type="region of interest" description="Disordered" evidence="5">
    <location>
        <begin position="234"/>
        <end position="254"/>
    </location>
</feature>
<feature type="compositionally biased region" description="Basic and acidic residues" evidence="5">
    <location>
        <begin position="239"/>
        <end position="254"/>
    </location>
</feature>
<feature type="site" description="Cleavage; by ADAM17" evidence="2">
    <location>
        <begin position="195"/>
        <end position="196"/>
    </location>
</feature>
<feature type="site" description="Important for receptor turnover" evidence="2">
    <location>
        <position position="222"/>
    </location>
</feature>
<feature type="glycosylation site" description="N-linked (GlcNAc...) asparagine" evidence="3">
    <location>
        <position position="187"/>
    </location>
</feature>
<feature type="disulfide bond" evidence="4">
    <location>
        <begin position="47"/>
        <end position="89"/>
    </location>
</feature>
<feature type="disulfide bond" evidence="4">
    <location>
        <begin position="128"/>
        <end position="172"/>
    </location>
</feature>